<name>M3A_CONQU</name>
<protein>
    <recommendedName>
        <fullName>Conotoxin QcIIIA</fullName>
    </recommendedName>
</protein>
<sequence>CCSQDCLVCIPCCPN</sequence>
<proteinExistence type="evidence at protein level"/>
<comment type="function">
    <text>Causes scratching in mice.</text>
</comment>
<comment type="subcellular location">
    <subcellularLocation>
        <location>Secreted</location>
    </subcellularLocation>
</comment>
<comment type="tissue specificity">
    <text>Expressed by the venom duct.</text>
</comment>
<comment type="domain">
    <text>The cysteine framework is III (CC-C-C-CC). Classified in the M-2 branch, since 2 residues stand between the fourth and the fifth cysteine residues.</text>
</comment>
<comment type="similarity">
    <text evidence="3">Belongs to the conotoxin M superfamily.</text>
</comment>
<organism>
    <name type="scientific">Conus quercinus</name>
    <name type="common">Oak cone</name>
    <dbReference type="NCBI Taxonomy" id="101313"/>
    <lineage>
        <taxon>Eukaryota</taxon>
        <taxon>Metazoa</taxon>
        <taxon>Spiralia</taxon>
        <taxon>Lophotrochozoa</taxon>
        <taxon>Mollusca</taxon>
        <taxon>Gastropoda</taxon>
        <taxon>Caenogastropoda</taxon>
        <taxon>Neogastropoda</taxon>
        <taxon>Conoidea</taxon>
        <taxon>Conidae</taxon>
        <taxon>Conus</taxon>
        <taxon>Lividoconus</taxon>
    </lineage>
</organism>
<reference key="1">
    <citation type="journal article" date="1990" name="Science">
        <title>Diversity of Conus neuropeptides.</title>
        <authorList>
            <person name="Olivera B.M."/>
            <person name="Rivier J."/>
            <person name="Clark C."/>
            <person name="Ramilo C.A."/>
            <person name="Corpuz G.P."/>
            <person name="Abogadie F.C."/>
            <person name="Mena E.E."/>
            <person name="Woodward S.R."/>
            <person name="Hillyard D.R."/>
            <person name="Cruz L.J."/>
        </authorList>
    </citation>
    <scope>PROTEIN SEQUENCE</scope>
    <scope>HYDROXYLATION AT PRO-11</scope>
    <scope>AMIDATION AT ASN-15</scope>
</reference>
<dbReference type="ConoServer" id="1514">
    <property type="toxin name" value="QcIIIA"/>
</dbReference>
<dbReference type="GO" id="GO:0005576">
    <property type="term" value="C:extracellular region"/>
    <property type="evidence" value="ECO:0007669"/>
    <property type="project" value="UniProtKB-SubCell"/>
</dbReference>
<dbReference type="GO" id="GO:0090729">
    <property type="term" value="F:toxin activity"/>
    <property type="evidence" value="ECO:0007669"/>
    <property type="project" value="UniProtKB-KW"/>
</dbReference>
<feature type="peptide" id="PRO_0000044501" description="Conotoxin QcIIIA">
    <location>
        <begin position="1"/>
        <end position="15"/>
    </location>
</feature>
<feature type="modified residue" description="4-hydroxyproline" evidence="2">
    <location>
        <position position="11"/>
    </location>
</feature>
<feature type="modified residue" description="Asparagine amide" evidence="2">
    <location>
        <position position="15"/>
    </location>
</feature>
<feature type="disulfide bond" evidence="1">
    <location>
        <begin position="1"/>
        <end position="13"/>
    </location>
</feature>
<feature type="disulfide bond" evidence="1">
    <location>
        <begin position="2"/>
        <end position="9"/>
    </location>
</feature>
<feature type="disulfide bond" evidence="1">
    <location>
        <begin position="6"/>
        <end position="12"/>
    </location>
</feature>
<accession>P58841</accession>
<evidence type="ECO:0000250" key="1">
    <source>
        <dbReference type="UniProtKB" id="P0CI24"/>
    </source>
</evidence>
<evidence type="ECO:0000269" key="2">
    <source>
    </source>
</evidence>
<evidence type="ECO:0000305" key="3"/>
<keyword id="KW-0027">Amidation</keyword>
<keyword id="KW-0903">Direct protein sequencing</keyword>
<keyword id="KW-1015">Disulfide bond</keyword>
<keyword id="KW-0379">Hydroxylation</keyword>
<keyword id="KW-0528">Neurotoxin</keyword>
<keyword id="KW-0964">Secreted</keyword>
<keyword id="KW-0800">Toxin</keyword>